<protein>
    <recommendedName>
        <fullName>Poly [ADP-ribose] polymerase 2</fullName>
        <shortName>PARP-2</shortName>
        <ecNumber>2.4.2.30</ecNumber>
    </recommendedName>
    <alternativeName>
        <fullName>NAD(+) ADP-ribosyltransferase 2</fullName>
        <shortName>ADPRT-2</shortName>
    </alternativeName>
    <alternativeName>
        <fullName>Poly[ADP-ribose] synthase 2</fullName>
    </alternativeName>
    <alternativeName>
        <fullName evidence="1">Protein ADP-ribosyltransferase PARP2</fullName>
        <ecNumber evidence="1">2.4.2.-</ecNumber>
    </alternativeName>
</protein>
<name>PARP2_ARATH</name>
<gene>
    <name type="primary">PARP2</name>
    <name type="synonym">APP</name>
    <name type="ordered locus">At4g02390</name>
    <name type="ORF">T14P8.19</name>
</gene>
<keyword id="KW-0013">ADP-ribosylation</keyword>
<keyword id="KW-0238">DNA-binding</keyword>
<keyword id="KW-0328">Glycosyltransferase</keyword>
<keyword id="KW-0520">NAD</keyword>
<keyword id="KW-0548">Nucleotidyltransferase</keyword>
<keyword id="KW-0539">Nucleus</keyword>
<keyword id="KW-1185">Reference proteome</keyword>
<keyword id="KW-0677">Repeat</keyword>
<keyword id="KW-0808">Transferase</keyword>
<reference key="1">
    <citation type="journal article" date="1995" name="FEBS Lett.">
        <title>Characterization of an Arabidopsis thaliana cDNA homologue to animal poly(ADP-ribose) polymerase.</title>
        <authorList>
            <person name="Lepiniec L."/>
            <person name="Babiychuk E."/>
            <person name="Kushnir S."/>
            <person name="van Montagu M."/>
            <person name="Inze D."/>
        </authorList>
    </citation>
    <scope>NUCLEOTIDE SEQUENCE [MRNA]</scope>
</reference>
<reference key="2">
    <citation type="journal article" date="1999" name="Nature">
        <title>Sequence and analysis of chromosome 4 of the plant Arabidopsis thaliana.</title>
        <authorList>
            <person name="Mayer K.F.X."/>
            <person name="Schueller C."/>
            <person name="Wambutt R."/>
            <person name="Murphy G."/>
            <person name="Volckaert G."/>
            <person name="Pohl T."/>
            <person name="Duesterhoeft A."/>
            <person name="Stiekema W."/>
            <person name="Entian K.-D."/>
            <person name="Terryn N."/>
            <person name="Harris B."/>
            <person name="Ansorge W."/>
            <person name="Brandt P."/>
            <person name="Grivell L.A."/>
            <person name="Rieger M."/>
            <person name="Weichselgartner M."/>
            <person name="de Simone V."/>
            <person name="Obermaier B."/>
            <person name="Mache R."/>
            <person name="Mueller M."/>
            <person name="Kreis M."/>
            <person name="Delseny M."/>
            <person name="Puigdomenech P."/>
            <person name="Watson M."/>
            <person name="Schmidtheini T."/>
            <person name="Reichert B."/>
            <person name="Portetelle D."/>
            <person name="Perez-Alonso M."/>
            <person name="Boutry M."/>
            <person name="Bancroft I."/>
            <person name="Vos P."/>
            <person name="Hoheisel J."/>
            <person name="Zimmermann W."/>
            <person name="Wedler H."/>
            <person name="Ridley P."/>
            <person name="Langham S.-A."/>
            <person name="McCullagh B."/>
            <person name="Bilham L."/>
            <person name="Robben J."/>
            <person name="van der Schueren J."/>
            <person name="Grymonprez B."/>
            <person name="Chuang Y.-J."/>
            <person name="Vandenbussche F."/>
            <person name="Braeken M."/>
            <person name="Weltjens I."/>
            <person name="Voet M."/>
            <person name="Bastiaens I."/>
            <person name="Aert R."/>
            <person name="Defoor E."/>
            <person name="Weitzenegger T."/>
            <person name="Bothe G."/>
            <person name="Ramsperger U."/>
            <person name="Hilbert H."/>
            <person name="Braun M."/>
            <person name="Holzer E."/>
            <person name="Brandt A."/>
            <person name="Peters S."/>
            <person name="van Staveren M."/>
            <person name="Dirkse W."/>
            <person name="Mooijman P."/>
            <person name="Klein Lankhorst R."/>
            <person name="Rose M."/>
            <person name="Hauf J."/>
            <person name="Koetter P."/>
            <person name="Berneiser S."/>
            <person name="Hempel S."/>
            <person name="Feldpausch M."/>
            <person name="Lamberth S."/>
            <person name="Van den Daele H."/>
            <person name="De Keyser A."/>
            <person name="Buysshaert C."/>
            <person name="Gielen J."/>
            <person name="Villarroel R."/>
            <person name="De Clercq R."/>
            <person name="van Montagu M."/>
            <person name="Rogers J."/>
            <person name="Cronin A."/>
            <person name="Quail M.A."/>
            <person name="Bray-Allen S."/>
            <person name="Clark L."/>
            <person name="Doggett J."/>
            <person name="Hall S."/>
            <person name="Kay M."/>
            <person name="Lennard N."/>
            <person name="McLay K."/>
            <person name="Mayes R."/>
            <person name="Pettett A."/>
            <person name="Rajandream M.A."/>
            <person name="Lyne M."/>
            <person name="Benes V."/>
            <person name="Rechmann S."/>
            <person name="Borkova D."/>
            <person name="Bloecker H."/>
            <person name="Scharfe M."/>
            <person name="Grimm M."/>
            <person name="Loehnert T.-H."/>
            <person name="Dose S."/>
            <person name="de Haan M."/>
            <person name="Maarse A.C."/>
            <person name="Schaefer M."/>
            <person name="Mueller-Auer S."/>
            <person name="Gabel C."/>
            <person name="Fuchs M."/>
            <person name="Fartmann B."/>
            <person name="Granderath K."/>
            <person name="Dauner D."/>
            <person name="Herzl A."/>
            <person name="Neumann S."/>
            <person name="Argiriou A."/>
            <person name="Vitale D."/>
            <person name="Liguori R."/>
            <person name="Piravandi E."/>
            <person name="Massenet O."/>
            <person name="Quigley F."/>
            <person name="Clabauld G."/>
            <person name="Muendlein A."/>
            <person name="Felber R."/>
            <person name="Schnabl S."/>
            <person name="Hiller R."/>
            <person name="Schmidt W."/>
            <person name="Lecharny A."/>
            <person name="Aubourg S."/>
            <person name="Chefdor F."/>
            <person name="Cooke R."/>
            <person name="Berger C."/>
            <person name="Monfort A."/>
            <person name="Casacuberta E."/>
            <person name="Gibbons T."/>
            <person name="Weber N."/>
            <person name="Vandenbol M."/>
            <person name="Bargues M."/>
            <person name="Terol J."/>
            <person name="Torres A."/>
            <person name="Perez-Perez A."/>
            <person name="Purnelle B."/>
            <person name="Bent E."/>
            <person name="Johnson S."/>
            <person name="Tacon D."/>
            <person name="Jesse T."/>
            <person name="Heijnen L."/>
            <person name="Schwarz S."/>
            <person name="Scholler P."/>
            <person name="Heber S."/>
            <person name="Francs P."/>
            <person name="Bielke C."/>
            <person name="Frishman D."/>
            <person name="Haase D."/>
            <person name="Lemcke K."/>
            <person name="Mewes H.-W."/>
            <person name="Stocker S."/>
            <person name="Zaccaria P."/>
            <person name="Bevan M."/>
            <person name="Wilson R.K."/>
            <person name="de la Bastide M."/>
            <person name="Habermann K."/>
            <person name="Parnell L."/>
            <person name="Dedhia N."/>
            <person name="Gnoj L."/>
            <person name="Schutz K."/>
            <person name="Huang E."/>
            <person name="Spiegel L."/>
            <person name="Sekhon M."/>
            <person name="Murray J."/>
            <person name="Sheet P."/>
            <person name="Cordes M."/>
            <person name="Abu-Threideh J."/>
            <person name="Stoneking T."/>
            <person name="Kalicki J."/>
            <person name="Graves T."/>
            <person name="Harmon G."/>
            <person name="Edwards J."/>
            <person name="Latreille P."/>
            <person name="Courtney L."/>
            <person name="Cloud J."/>
            <person name="Abbott A."/>
            <person name="Scott K."/>
            <person name="Johnson D."/>
            <person name="Minx P."/>
            <person name="Bentley D."/>
            <person name="Fulton B."/>
            <person name="Miller N."/>
            <person name="Greco T."/>
            <person name="Kemp K."/>
            <person name="Kramer J."/>
            <person name="Fulton L."/>
            <person name="Mardis E."/>
            <person name="Dante M."/>
            <person name="Pepin K."/>
            <person name="Hillier L.W."/>
            <person name="Nelson J."/>
            <person name="Spieth J."/>
            <person name="Ryan E."/>
            <person name="Andrews S."/>
            <person name="Geisel C."/>
            <person name="Layman D."/>
            <person name="Du H."/>
            <person name="Ali J."/>
            <person name="Berghoff A."/>
            <person name="Jones K."/>
            <person name="Drone K."/>
            <person name="Cotton M."/>
            <person name="Joshu C."/>
            <person name="Antonoiu B."/>
            <person name="Zidanic M."/>
            <person name="Strong C."/>
            <person name="Sun H."/>
            <person name="Lamar B."/>
            <person name="Yordan C."/>
            <person name="Ma P."/>
            <person name="Zhong J."/>
            <person name="Preston R."/>
            <person name="Vil D."/>
            <person name="Shekher M."/>
            <person name="Matero A."/>
            <person name="Shah R."/>
            <person name="Swaby I.K."/>
            <person name="O'Shaughnessy A."/>
            <person name="Rodriguez M."/>
            <person name="Hoffman J."/>
            <person name="Till S."/>
            <person name="Granat S."/>
            <person name="Shohdy N."/>
            <person name="Hasegawa A."/>
            <person name="Hameed A."/>
            <person name="Lodhi M."/>
            <person name="Johnson A."/>
            <person name="Chen E."/>
            <person name="Marra M.A."/>
            <person name="Martienssen R."/>
            <person name="McCombie W.R."/>
        </authorList>
    </citation>
    <scope>NUCLEOTIDE SEQUENCE [LARGE SCALE GENOMIC DNA]</scope>
    <source>
        <strain>cv. Columbia</strain>
    </source>
</reference>
<reference key="3">
    <citation type="journal article" date="2017" name="Plant J.">
        <title>Araport11: a complete reannotation of the Arabidopsis thaliana reference genome.</title>
        <authorList>
            <person name="Cheng C.Y."/>
            <person name="Krishnakumar V."/>
            <person name="Chan A.P."/>
            <person name="Thibaud-Nissen F."/>
            <person name="Schobel S."/>
            <person name="Town C.D."/>
        </authorList>
    </citation>
    <scope>GENOME REANNOTATION</scope>
    <source>
        <strain>cv. Columbia</strain>
    </source>
</reference>
<reference key="4">
    <citation type="journal article" date="2001" name="Mol. Genet. Genomics">
        <title>Ionising radiation induces the expression of PARP-1 and PARP-2 genes in Arabidopsis.</title>
        <authorList>
            <person name="Doucet-Chabeaud G."/>
            <person name="Godon C."/>
            <person name="Brutesco C."/>
            <person name="de Murcia G."/>
            <person name="Kazmaier M."/>
        </authorList>
    </citation>
    <scope>INDUCTION</scope>
</reference>
<sequence>MANKLKVDELRLKLAERGLSTTGVKAVLVERLEEAIAEDTKKEESKSKRKRNSSNDTYESNKLIAIGEFRGMIVKELREEAIKRGLDTTGTKKDLLERLCNDANNVSNAPVKSSNGTDEAEDDNNGFEEEKKEEKIVTATKKGAAVLDQWIPDEIKSQYHVLQRGDDVYDAILNQTNVRDNNNKFFVLQVLESDSKKTYMVYTRWGRVGVKGQSKLDGPYDSWDRAIEIFTNKFNDKTKNYWSDRKEFIPHPKSYTWLEMDYGKEENDSPVNNDIPSSSSEVKPEQSKLDTRVAKFISLICNVSMMAQHMMEIGYNANKLPLGKISKSTISKGYEVLKRISEVIDRYDRTRLEELSGEFYTVIPHDFGFKKMSQFVIDTPQKLKQKIEMVEALGEIELATKLLSVDPGLQDDPLYYHYQQLNCGLTPVGNDSEEFSMVANYMENTHAKTHSGYTVEIAQLFRASRAVEADRFQQFSSSKNRMLLWHGSRLTNWAGILSQGLRIAPPEAPVTGYMFGKGVYFADMFSKSANYCYANTGANDGVLLLCEVALGDMNELLYSDYNADNLPPGKLSTKGVGKTAPNPSEAQTLEDGVVVPLGKPVERSCSKGMLLYNEYIVYNVEQIKMRYVIQVKFNYKH</sequence>
<proteinExistence type="evidence at transcript level"/>
<comment type="function">
    <text evidence="1">Involved in the base excision repair (BER) pathway, by catalyzing the poly(ADP-ribosyl)ation of a limited number of acceptor proteins involved in chromatin architecture and in DNA metabolism. This modification follows DNA damages and appears as an obligatory step in a detection/signaling pathway leading to the reparation of DNA strand breaks (By similarity).</text>
</comment>
<comment type="catalytic activity">
    <reaction evidence="1">
        <text>NAD(+) + (ADP-D-ribosyl)n-acceptor = nicotinamide + (ADP-D-ribosyl)n+1-acceptor + H(+).</text>
        <dbReference type="EC" id="2.4.2.30"/>
    </reaction>
</comment>
<comment type="catalytic activity">
    <reaction evidence="1">
        <text>L-aspartyl-[protein] + NAD(+) = 4-O-(ADP-D-ribosyl)-L-aspartyl-[protein] + nicotinamide</text>
        <dbReference type="Rhea" id="RHEA:54424"/>
        <dbReference type="Rhea" id="RHEA-COMP:9867"/>
        <dbReference type="Rhea" id="RHEA-COMP:13832"/>
        <dbReference type="ChEBI" id="CHEBI:17154"/>
        <dbReference type="ChEBI" id="CHEBI:29961"/>
        <dbReference type="ChEBI" id="CHEBI:57540"/>
        <dbReference type="ChEBI" id="CHEBI:138102"/>
    </reaction>
</comment>
<comment type="catalytic activity">
    <reaction evidence="1">
        <text>L-glutamyl-[protein] + NAD(+) = 5-O-(ADP-D-ribosyl)-L-glutamyl-[protein] + nicotinamide</text>
        <dbReference type="Rhea" id="RHEA:58224"/>
        <dbReference type="Rhea" id="RHEA-COMP:10208"/>
        <dbReference type="Rhea" id="RHEA-COMP:15089"/>
        <dbReference type="ChEBI" id="CHEBI:17154"/>
        <dbReference type="ChEBI" id="CHEBI:29973"/>
        <dbReference type="ChEBI" id="CHEBI:57540"/>
        <dbReference type="ChEBI" id="CHEBI:142540"/>
    </reaction>
</comment>
<comment type="subcellular location">
    <subcellularLocation>
        <location>Nucleus</location>
    </subcellularLocation>
</comment>
<comment type="induction">
    <text evidence="8">By ionising radiation (IR)-induced DNA damage, by dehydration and after cadmium exposure.</text>
</comment>
<comment type="similarity">
    <text evidence="9">Belongs to the ARTD/PARP family.</text>
</comment>
<comment type="sequence caution" evidence="9">
    <conflict type="erroneous gene model prediction">
        <sequence resource="EMBL-CDS" id="AAC19283"/>
    </conflict>
</comment>
<comment type="sequence caution" evidence="9">
    <conflict type="erroneous gene model prediction">
        <sequence resource="EMBL-CDS" id="CAB80732"/>
    </conflict>
</comment>
<feature type="chain" id="PRO_0000211332" description="Poly [ADP-ribose] polymerase 2">
    <location>
        <begin position="1"/>
        <end position="637"/>
    </location>
</feature>
<feature type="domain" description="SAP 1" evidence="3">
    <location>
        <begin position="2"/>
        <end position="36"/>
    </location>
</feature>
<feature type="domain" description="SAP 2" evidence="3">
    <location>
        <begin position="69"/>
        <end position="103"/>
    </location>
</feature>
<feature type="domain" description="WGR" evidence="6">
    <location>
        <begin position="158"/>
        <end position="255"/>
    </location>
</feature>
<feature type="domain" description="PARP alpha-helical" evidence="5">
    <location>
        <begin position="286"/>
        <end position="404"/>
    </location>
</feature>
<feature type="domain" description="PARP catalytic" evidence="4">
    <location>
        <begin position="412"/>
        <end position="637"/>
    </location>
</feature>
<feature type="DNA-binding region" evidence="2">
    <location>
        <begin position="1"/>
        <end position="140"/>
    </location>
</feature>
<feature type="region of interest" description="Disordered" evidence="7">
    <location>
        <begin position="35"/>
        <end position="56"/>
    </location>
</feature>
<feature type="region of interest" description="Disordered" evidence="7">
    <location>
        <begin position="106"/>
        <end position="134"/>
    </location>
</feature>
<feature type="short sequence motif" description="Nuclear localization signal" evidence="2">
    <location>
        <begin position="41"/>
        <end position="62"/>
    </location>
</feature>
<feature type="compositionally biased region" description="Basic and acidic residues" evidence="7">
    <location>
        <begin position="35"/>
        <end position="46"/>
    </location>
</feature>
<feature type="compositionally biased region" description="Polar residues" evidence="7">
    <location>
        <begin position="106"/>
        <end position="117"/>
    </location>
</feature>
<feature type="compositionally biased region" description="Acidic residues" evidence="7">
    <location>
        <begin position="118"/>
        <end position="127"/>
    </location>
</feature>
<evidence type="ECO:0000250" key="1">
    <source>
        <dbReference type="UniProtKB" id="P09874"/>
    </source>
</evidence>
<evidence type="ECO:0000255" key="2"/>
<evidence type="ECO:0000255" key="3">
    <source>
        <dbReference type="PROSITE-ProRule" id="PRU00186"/>
    </source>
</evidence>
<evidence type="ECO:0000255" key="4">
    <source>
        <dbReference type="PROSITE-ProRule" id="PRU00397"/>
    </source>
</evidence>
<evidence type="ECO:0000255" key="5">
    <source>
        <dbReference type="PROSITE-ProRule" id="PRU00398"/>
    </source>
</evidence>
<evidence type="ECO:0000255" key="6">
    <source>
        <dbReference type="PROSITE-ProRule" id="PRU01321"/>
    </source>
</evidence>
<evidence type="ECO:0000256" key="7">
    <source>
        <dbReference type="SAM" id="MobiDB-lite"/>
    </source>
</evidence>
<evidence type="ECO:0000269" key="8">
    <source>
    </source>
</evidence>
<evidence type="ECO:0000305" key="9"/>
<organism>
    <name type="scientific">Arabidopsis thaliana</name>
    <name type="common">Mouse-ear cress</name>
    <dbReference type="NCBI Taxonomy" id="3702"/>
    <lineage>
        <taxon>Eukaryota</taxon>
        <taxon>Viridiplantae</taxon>
        <taxon>Streptophyta</taxon>
        <taxon>Embryophyta</taxon>
        <taxon>Tracheophyta</taxon>
        <taxon>Spermatophyta</taxon>
        <taxon>Magnoliopsida</taxon>
        <taxon>eudicotyledons</taxon>
        <taxon>Gunneridae</taxon>
        <taxon>Pentapetalae</taxon>
        <taxon>rosids</taxon>
        <taxon>malvids</taxon>
        <taxon>Brassicales</taxon>
        <taxon>Brassicaceae</taxon>
        <taxon>Camelineae</taxon>
        <taxon>Arabidopsis</taxon>
    </lineage>
</organism>
<accession>Q11207</accession>
<accession>O81294</accession>
<dbReference type="EC" id="2.4.2.30"/>
<dbReference type="EC" id="2.4.2.-" evidence="1"/>
<dbReference type="EMBL" id="Z48243">
    <property type="protein sequence ID" value="CAA88288.1"/>
    <property type="molecule type" value="mRNA"/>
</dbReference>
<dbReference type="EMBL" id="AF069298">
    <property type="protein sequence ID" value="AAC19283.1"/>
    <property type="status" value="ALT_SEQ"/>
    <property type="molecule type" value="Genomic_DNA"/>
</dbReference>
<dbReference type="EMBL" id="AL161494">
    <property type="protein sequence ID" value="CAB80732.1"/>
    <property type="status" value="ALT_SEQ"/>
    <property type="molecule type" value="Genomic_DNA"/>
</dbReference>
<dbReference type="EMBL" id="CP002687">
    <property type="protein sequence ID" value="AEE82163.1"/>
    <property type="molecule type" value="Genomic_DNA"/>
</dbReference>
<dbReference type="PIR" id="T01311">
    <property type="entry name" value="T01311"/>
</dbReference>
<dbReference type="RefSeq" id="NP_001329308.1">
    <property type="nucleotide sequence ID" value="NM_001340373.1"/>
</dbReference>
<dbReference type="RefSeq" id="NP_192148.2">
    <property type="nucleotide sequence ID" value="NM_116472.4"/>
</dbReference>
<dbReference type="SMR" id="Q11207"/>
<dbReference type="BioGRID" id="13340">
    <property type="interactions" value="6"/>
</dbReference>
<dbReference type="FunCoup" id="Q11207">
    <property type="interactions" value="2401"/>
</dbReference>
<dbReference type="STRING" id="3702.Q11207"/>
<dbReference type="iPTMnet" id="Q11207"/>
<dbReference type="PaxDb" id="3702-AT4G02390.1"/>
<dbReference type="ProteomicsDB" id="236327"/>
<dbReference type="EnsemblPlants" id="AT4G02390.1">
    <property type="protein sequence ID" value="AT4G02390.1"/>
    <property type="gene ID" value="AT4G02390"/>
</dbReference>
<dbReference type="GeneID" id="828049"/>
<dbReference type="Gramene" id="AT4G02390.1">
    <property type="protein sequence ID" value="AT4G02390.1"/>
    <property type="gene ID" value="AT4G02390"/>
</dbReference>
<dbReference type="KEGG" id="ath:AT4G02390"/>
<dbReference type="Araport" id="AT4G02390"/>
<dbReference type="TAIR" id="AT4G02390">
    <property type="gene designation" value="PARP2"/>
</dbReference>
<dbReference type="eggNOG" id="KOG1037">
    <property type="taxonomic scope" value="Eukaryota"/>
</dbReference>
<dbReference type="HOGENOM" id="CLU_004841_2_1_1"/>
<dbReference type="InParanoid" id="Q11207"/>
<dbReference type="PhylomeDB" id="Q11207"/>
<dbReference type="CD-CODE" id="4299E36E">
    <property type="entry name" value="Nucleolus"/>
</dbReference>
<dbReference type="PRO" id="PR:Q11207"/>
<dbReference type="Proteomes" id="UP000006548">
    <property type="component" value="Chromosome 4"/>
</dbReference>
<dbReference type="ExpressionAtlas" id="Q11207">
    <property type="expression patterns" value="baseline and differential"/>
</dbReference>
<dbReference type="GO" id="GO:0005634">
    <property type="term" value="C:nucleus"/>
    <property type="evidence" value="ECO:0000314"/>
    <property type="project" value="TAIR"/>
</dbReference>
<dbReference type="GO" id="GO:0003677">
    <property type="term" value="F:DNA binding"/>
    <property type="evidence" value="ECO:0007669"/>
    <property type="project" value="UniProtKB-KW"/>
</dbReference>
<dbReference type="GO" id="GO:0003950">
    <property type="term" value="F:NAD+ poly-ADP-ribosyltransferase activity"/>
    <property type="evidence" value="ECO:0000314"/>
    <property type="project" value="TAIR"/>
</dbReference>
<dbReference type="GO" id="GO:0140806">
    <property type="term" value="F:NAD+-protein-aspartate ADP-ribosyltransferase activity"/>
    <property type="evidence" value="ECO:0007669"/>
    <property type="project" value="RHEA"/>
</dbReference>
<dbReference type="GO" id="GO:0140807">
    <property type="term" value="F:NAD+-protein-glutamate ADP-ribosyltransferase activity"/>
    <property type="evidence" value="ECO:0007669"/>
    <property type="project" value="RHEA"/>
</dbReference>
<dbReference type="GO" id="GO:0016779">
    <property type="term" value="F:nucleotidyltransferase activity"/>
    <property type="evidence" value="ECO:0007669"/>
    <property type="project" value="UniProtKB-KW"/>
</dbReference>
<dbReference type="GO" id="GO:0030592">
    <property type="term" value="P:DNA ADP-ribosylation"/>
    <property type="evidence" value="ECO:0000314"/>
    <property type="project" value="TAIR"/>
</dbReference>
<dbReference type="GO" id="GO:0006303">
    <property type="term" value="P:double-strand break repair via nonhomologous end joining"/>
    <property type="evidence" value="ECO:0000315"/>
    <property type="project" value="TAIR"/>
</dbReference>
<dbReference type="GO" id="GO:0070212">
    <property type="term" value="P:protein poly-ADP-ribosylation"/>
    <property type="evidence" value="ECO:0000314"/>
    <property type="project" value="TAIR"/>
</dbReference>
<dbReference type="CDD" id="cd01437">
    <property type="entry name" value="parp_like"/>
    <property type="match status" value="1"/>
</dbReference>
<dbReference type="CDD" id="cd08002">
    <property type="entry name" value="WGR_PARP3_like"/>
    <property type="match status" value="1"/>
</dbReference>
<dbReference type="FunFam" id="1.20.142.10:FF:000005">
    <property type="entry name" value="Poly [ADP-ribose] polymerase"/>
    <property type="match status" value="1"/>
</dbReference>
<dbReference type="FunFam" id="2.20.140.10:FF:000001">
    <property type="entry name" value="Poly [ADP-ribose] polymerase"/>
    <property type="match status" value="1"/>
</dbReference>
<dbReference type="FunFam" id="3.90.228.10:FF:000002">
    <property type="entry name" value="Poly [ADP-ribose] polymerase"/>
    <property type="match status" value="1"/>
</dbReference>
<dbReference type="Gene3D" id="3.90.228.10">
    <property type="match status" value="1"/>
</dbReference>
<dbReference type="Gene3D" id="1.20.142.10">
    <property type="entry name" value="Poly(ADP-ribose) polymerase, regulatory domain"/>
    <property type="match status" value="1"/>
</dbReference>
<dbReference type="Gene3D" id="1.10.720.30">
    <property type="entry name" value="SAP domain"/>
    <property type="match status" value="2"/>
</dbReference>
<dbReference type="Gene3D" id="2.20.140.10">
    <property type="entry name" value="WGR domain"/>
    <property type="match status" value="1"/>
</dbReference>
<dbReference type="InterPro" id="IPR050800">
    <property type="entry name" value="ARTD/PARP"/>
</dbReference>
<dbReference type="InterPro" id="IPR012317">
    <property type="entry name" value="Poly(ADP-ribose)pol_cat_dom"/>
</dbReference>
<dbReference type="InterPro" id="IPR004102">
    <property type="entry name" value="Poly(ADP-ribose)pol_reg_dom"/>
</dbReference>
<dbReference type="InterPro" id="IPR036616">
    <property type="entry name" value="Poly(ADP-ribose)pol_reg_dom_sf"/>
</dbReference>
<dbReference type="InterPro" id="IPR003034">
    <property type="entry name" value="SAP_dom"/>
</dbReference>
<dbReference type="InterPro" id="IPR036361">
    <property type="entry name" value="SAP_dom_sf"/>
</dbReference>
<dbReference type="InterPro" id="IPR036930">
    <property type="entry name" value="WGR_dom_sf"/>
</dbReference>
<dbReference type="InterPro" id="IPR008893">
    <property type="entry name" value="WGR_domain"/>
</dbReference>
<dbReference type="PANTHER" id="PTHR10459">
    <property type="entry name" value="DNA LIGASE"/>
    <property type="match status" value="1"/>
</dbReference>
<dbReference type="PANTHER" id="PTHR10459:SF60">
    <property type="entry name" value="POLY [ADP-RIBOSE] POLYMERASE 2"/>
    <property type="match status" value="1"/>
</dbReference>
<dbReference type="Pfam" id="PF00644">
    <property type="entry name" value="PARP"/>
    <property type="match status" value="1"/>
</dbReference>
<dbReference type="Pfam" id="PF02877">
    <property type="entry name" value="PARP_reg"/>
    <property type="match status" value="1"/>
</dbReference>
<dbReference type="Pfam" id="PF02037">
    <property type="entry name" value="SAP"/>
    <property type="match status" value="2"/>
</dbReference>
<dbReference type="Pfam" id="PF05406">
    <property type="entry name" value="WGR"/>
    <property type="match status" value="1"/>
</dbReference>
<dbReference type="SMART" id="SM00513">
    <property type="entry name" value="SAP"/>
    <property type="match status" value="2"/>
</dbReference>
<dbReference type="SMART" id="SM00773">
    <property type="entry name" value="WGR"/>
    <property type="match status" value="1"/>
</dbReference>
<dbReference type="SUPFAM" id="SSF56399">
    <property type="entry name" value="ADP-ribosylation"/>
    <property type="match status" value="1"/>
</dbReference>
<dbReference type="SUPFAM" id="SSF47587">
    <property type="entry name" value="Domain of poly(ADP-ribose) polymerase"/>
    <property type="match status" value="1"/>
</dbReference>
<dbReference type="SUPFAM" id="SSF68906">
    <property type="entry name" value="SAP domain"/>
    <property type="match status" value="2"/>
</dbReference>
<dbReference type="SUPFAM" id="SSF142921">
    <property type="entry name" value="WGR domain-like"/>
    <property type="match status" value="1"/>
</dbReference>
<dbReference type="PROSITE" id="PS51060">
    <property type="entry name" value="PARP_ALPHA_HD"/>
    <property type="match status" value="1"/>
</dbReference>
<dbReference type="PROSITE" id="PS51059">
    <property type="entry name" value="PARP_CATALYTIC"/>
    <property type="match status" value="1"/>
</dbReference>
<dbReference type="PROSITE" id="PS50800">
    <property type="entry name" value="SAP"/>
    <property type="match status" value="2"/>
</dbReference>
<dbReference type="PROSITE" id="PS51977">
    <property type="entry name" value="WGR"/>
    <property type="match status" value="1"/>
</dbReference>